<organism>
    <name type="scientific">Bacillus subtilis (strain 168)</name>
    <dbReference type="NCBI Taxonomy" id="224308"/>
    <lineage>
        <taxon>Bacteria</taxon>
        <taxon>Bacillati</taxon>
        <taxon>Bacillota</taxon>
        <taxon>Bacilli</taxon>
        <taxon>Bacillales</taxon>
        <taxon>Bacillaceae</taxon>
        <taxon>Bacillus</taxon>
    </lineage>
</organism>
<proteinExistence type="evidence at transcript level"/>
<dbReference type="EC" id="1.1.5.3"/>
<dbReference type="EMBL" id="M34393">
    <property type="protein sequence ID" value="AAA22487.1"/>
    <property type="molecule type" value="Genomic_DNA"/>
</dbReference>
<dbReference type="EMBL" id="Y14079">
    <property type="protein sequence ID" value="CAA74430.1"/>
    <property type="molecule type" value="Genomic_DNA"/>
</dbReference>
<dbReference type="EMBL" id="AL009126">
    <property type="protein sequence ID" value="CAB12758.2"/>
    <property type="molecule type" value="Genomic_DNA"/>
</dbReference>
<dbReference type="PIR" id="C45868">
    <property type="entry name" value="C45868"/>
</dbReference>
<dbReference type="RefSeq" id="NP_388811.2">
    <property type="nucleotide sequence ID" value="NC_000964.3"/>
</dbReference>
<dbReference type="RefSeq" id="WP_003233382.1">
    <property type="nucleotide sequence ID" value="NZ_OZ025638.1"/>
</dbReference>
<dbReference type="SMR" id="P18158"/>
<dbReference type="FunCoup" id="P18158">
    <property type="interactions" value="504"/>
</dbReference>
<dbReference type="STRING" id="224308.BSU09300"/>
<dbReference type="jPOST" id="P18158"/>
<dbReference type="PaxDb" id="224308-BSU09300"/>
<dbReference type="EnsemblBacteria" id="CAB12758">
    <property type="protein sequence ID" value="CAB12758"/>
    <property type="gene ID" value="BSU_09300"/>
</dbReference>
<dbReference type="GeneID" id="936250"/>
<dbReference type="KEGG" id="bsu:BSU09300"/>
<dbReference type="PATRIC" id="fig|224308.179.peg.1003"/>
<dbReference type="eggNOG" id="COG0578">
    <property type="taxonomic scope" value="Bacteria"/>
</dbReference>
<dbReference type="InParanoid" id="P18158"/>
<dbReference type="OrthoDB" id="9766796at2"/>
<dbReference type="PhylomeDB" id="P18158"/>
<dbReference type="BioCyc" id="BSUB:BSU09300-MONOMER"/>
<dbReference type="UniPathway" id="UPA00618">
    <property type="reaction ID" value="UER00674"/>
</dbReference>
<dbReference type="Proteomes" id="UP000001570">
    <property type="component" value="Chromosome"/>
</dbReference>
<dbReference type="GO" id="GO:0005737">
    <property type="term" value="C:cytoplasm"/>
    <property type="evidence" value="ECO:0007669"/>
    <property type="project" value="UniProtKB-SubCell"/>
</dbReference>
<dbReference type="GO" id="GO:0004368">
    <property type="term" value="F:glycerol-3-phosphate dehydrogenase (quinone) activity"/>
    <property type="evidence" value="ECO:0000318"/>
    <property type="project" value="GO_Central"/>
</dbReference>
<dbReference type="GO" id="GO:0019563">
    <property type="term" value="P:glycerol catabolic process"/>
    <property type="evidence" value="ECO:0007669"/>
    <property type="project" value="UniProtKB-UniPathway"/>
</dbReference>
<dbReference type="GO" id="GO:0046168">
    <property type="term" value="P:glycerol-3-phosphate catabolic process"/>
    <property type="evidence" value="ECO:0000318"/>
    <property type="project" value="GO_Central"/>
</dbReference>
<dbReference type="Gene3D" id="1.10.8.870">
    <property type="entry name" value="Alpha-glycerophosphate oxidase, cap domain"/>
    <property type="match status" value="1"/>
</dbReference>
<dbReference type="Gene3D" id="3.30.9.10">
    <property type="entry name" value="D-Amino Acid Oxidase, subunit A, domain 2"/>
    <property type="match status" value="1"/>
</dbReference>
<dbReference type="Gene3D" id="3.50.50.60">
    <property type="entry name" value="FAD/NAD(P)-binding domain"/>
    <property type="match status" value="1"/>
</dbReference>
<dbReference type="InterPro" id="IPR031656">
    <property type="entry name" value="DAO_C"/>
</dbReference>
<dbReference type="InterPro" id="IPR038299">
    <property type="entry name" value="DAO_C_sf"/>
</dbReference>
<dbReference type="InterPro" id="IPR006076">
    <property type="entry name" value="FAD-dep_OxRdtase"/>
</dbReference>
<dbReference type="InterPro" id="IPR036188">
    <property type="entry name" value="FAD/NAD-bd_sf"/>
</dbReference>
<dbReference type="InterPro" id="IPR000447">
    <property type="entry name" value="G3P_DH_FAD-dep"/>
</dbReference>
<dbReference type="PANTHER" id="PTHR11985:SF35">
    <property type="entry name" value="ANAEROBIC GLYCEROL-3-PHOSPHATE DEHYDROGENASE SUBUNIT A"/>
    <property type="match status" value="1"/>
</dbReference>
<dbReference type="PANTHER" id="PTHR11985">
    <property type="entry name" value="GLYCEROL-3-PHOSPHATE DEHYDROGENASE"/>
    <property type="match status" value="1"/>
</dbReference>
<dbReference type="Pfam" id="PF01266">
    <property type="entry name" value="DAO"/>
    <property type="match status" value="1"/>
</dbReference>
<dbReference type="Pfam" id="PF16901">
    <property type="entry name" value="DAO_C"/>
    <property type="match status" value="1"/>
</dbReference>
<dbReference type="PRINTS" id="PR01001">
    <property type="entry name" value="FADG3PDH"/>
</dbReference>
<dbReference type="SUPFAM" id="SSF54373">
    <property type="entry name" value="FAD-linked reductases, C-terminal domain"/>
    <property type="match status" value="1"/>
</dbReference>
<dbReference type="SUPFAM" id="SSF51905">
    <property type="entry name" value="FAD/NAD(P)-binding domain"/>
    <property type="match status" value="1"/>
</dbReference>
<dbReference type="PROSITE" id="PS00977">
    <property type="entry name" value="FAD_G3PDH_1"/>
    <property type="match status" value="1"/>
</dbReference>
<dbReference type="PROSITE" id="PS00978">
    <property type="entry name" value="FAD_G3PDH_2"/>
    <property type="match status" value="1"/>
</dbReference>
<sequence>MMNHQFSSLERDRMLTDMTKKTYDLFIIGGGITGAGTALDAASRGMKVALSEMQDFAAGTSSRSTKLVHGGLRYLKQFEVKMVAEVGKERAIVYENGPHVTTPEWMLLPFHKGGTFGSFTTSIGLRVYDFLAGVKKSERRSMLSAKETLQKEPLVKKDGLKGGGYYVEYRTDDARLTIEVMKEAVKFGAEPVNYSKVKELLYEKGKAVGVLIEDVLTKKEYKVYAKKIVNATGPWVDQLREKDHSKNGKHLQHTKGIHLVFDQSVFPLKQAVYFDTPDGRMVFAIPREGKTYVGTTDTVYKEALEHPRMTTEDRDYVIKSINYMFPELNITANDIESSWAGLRPLIHEEGKDPSEISRKDEIWTSDSGLITIAGGKLTGYRKMAEHIVDLVRDRLKEEGEKDFGPCKTKNMPISGGHVGGSKNLMSFVTAKTKEGIAAGLSEKDAKQLAIRYGSNVDRVFDRVEALKDEAAKRNIPVHILAEAEYSIEEEMTATPADFFVRRTGRLFFDINWVRTYKDAVIDFMSERFQWDEQAKNKHTENLNKLLHDAVVPLEQ</sequence>
<reference key="1">
    <citation type="journal article" date="1990" name="J. Gen. Microbiol.">
        <title>Glycerol catabolism in Bacillus subtilis: nucleotide sequence of the genes encoding glycerol kinase (glpK) and glycerol-3-phosphate dehydrogenase (glpD).</title>
        <authorList>
            <person name="Holmberg C."/>
            <person name="Beijer L."/>
            <person name="Rutberg B."/>
            <person name="Rutberg L."/>
        </authorList>
    </citation>
    <scope>NUCLEOTIDE SEQUENCE [GENOMIC DNA]</scope>
</reference>
<reference key="2">
    <citation type="journal article" date="1998" name="Microbiology">
        <title>The 172 kb prkA-addAB region from 83 degrees to 97 degrees of the Bacillus subtilis chromosome contains several dysfunctional genes, the glyB marker, many genes encoding transporter proteins, and the ubiquitous hit gene.</title>
        <authorList>
            <person name="Noback M.A."/>
            <person name="Holsappel S."/>
            <person name="Kiewiet R."/>
            <person name="Terpstra P."/>
            <person name="Wambutt R."/>
            <person name="Wedler H."/>
            <person name="Venema G."/>
            <person name="Bron S."/>
        </authorList>
    </citation>
    <scope>NUCLEOTIDE SEQUENCE [GENOMIC DNA]</scope>
</reference>
<reference key="3">
    <citation type="journal article" date="1997" name="Nature">
        <title>The complete genome sequence of the Gram-positive bacterium Bacillus subtilis.</title>
        <authorList>
            <person name="Kunst F."/>
            <person name="Ogasawara N."/>
            <person name="Moszer I."/>
            <person name="Albertini A.M."/>
            <person name="Alloni G."/>
            <person name="Azevedo V."/>
            <person name="Bertero M.G."/>
            <person name="Bessieres P."/>
            <person name="Bolotin A."/>
            <person name="Borchert S."/>
            <person name="Borriss R."/>
            <person name="Boursier L."/>
            <person name="Brans A."/>
            <person name="Braun M."/>
            <person name="Brignell S.C."/>
            <person name="Bron S."/>
            <person name="Brouillet S."/>
            <person name="Bruschi C.V."/>
            <person name="Caldwell B."/>
            <person name="Capuano V."/>
            <person name="Carter N.M."/>
            <person name="Choi S.-K."/>
            <person name="Codani J.-J."/>
            <person name="Connerton I.F."/>
            <person name="Cummings N.J."/>
            <person name="Daniel R.A."/>
            <person name="Denizot F."/>
            <person name="Devine K.M."/>
            <person name="Duesterhoeft A."/>
            <person name="Ehrlich S.D."/>
            <person name="Emmerson P.T."/>
            <person name="Entian K.-D."/>
            <person name="Errington J."/>
            <person name="Fabret C."/>
            <person name="Ferrari E."/>
            <person name="Foulger D."/>
            <person name="Fritz C."/>
            <person name="Fujita M."/>
            <person name="Fujita Y."/>
            <person name="Fuma S."/>
            <person name="Galizzi A."/>
            <person name="Galleron N."/>
            <person name="Ghim S.-Y."/>
            <person name="Glaser P."/>
            <person name="Goffeau A."/>
            <person name="Golightly E.J."/>
            <person name="Grandi G."/>
            <person name="Guiseppi G."/>
            <person name="Guy B.J."/>
            <person name="Haga K."/>
            <person name="Haiech J."/>
            <person name="Harwood C.R."/>
            <person name="Henaut A."/>
            <person name="Hilbert H."/>
            <person name="Holsappel S."/>
            <person name="Hosono S."/>
            <person name="Hullo M.-F."/>
            <person name="Itaya M."/>
            <person name="Jones L.-M."/>
            <person name="Joris B."/>
            <person name="Karamata D."/>
            <person name="Kasahara Y."/>
            <person name="Klaerr-Blanchard M."/>
            <person name="Klein C."/>
            <person name="Kobayashi Y."/>
            <person name="Koetter P."/>
            <person name="Koningstein G."/>
            <person name="Krogh S."/>
            <person name="Kumano M."/>
            <person name="Kurita K."/>
            <person name="Lapidus A."/>
            <person name="Lardinois S."/>
            <person name="Lauber J."/>
            <person name="Lazarevic V."/>
            <person name="Lee S.-M."/>
            <person name="Levine A."/>
            <person name="Liu H."/>
            <person name="Masuda S."/>
            <person name="Mauel C."/>
            <person name="Medigue C."/>
            <person name="Medina N."/>
            <person name="Mellado R.P."/>
            <person name="Mizuno M."/>
            <person name="Moestl D."/>
            <person name="Nakai S."/>
            <person name="Noback M."/>
            <person name="Noone D."/>
            <person name="O'Reilly M."/>
            <person name="Ogawa K."/>
            <person name="Ogiwara A."/>
            <person name="Oudega B."/>
            <person name="Park S.-H."/>
            <person name="Parro V."/>
            <person name="Pohl T.M."/>
            <person name="Portetelle D."/>
            <person name="Porwollik S."/>
            <person name="Prescott A.M."/>
            <person name="Presecan E."/>
            <person name="Pujic P."/>
            <person name="Purnelle B."/>
            <person name="Rapoport G."/>
            <person name="Rey M."/>
            <person name="Reynolds S."/>
            <person name="Rieger M."/>
            <person name="Rivolta C."/>
            <person name="Rocha E."/>
            <person name="Roche B."/>
            <person name="Rose M."/>
            <person name="Sadaie Y."/>
            <person name="Sato T."/>
            <person name="Scanlan E."/>
            <person name="Schleich S."/>
            <person name="Schroeter R."/>
            <person name="Scoffone F."/>
            <person name="Sekiguchi J."/>
            <person name="Sekowska A."/>
            <person name="Seror S.J."/>
            <person name="Serror P."/>
            <person name="Shin B.-S."/>
            <person name="Soldo B."/>
            <person name="Sorokin A."/>
            <person name="Tacconi E."/>
            <person name="Takagi T."/>
            <person name="Takahashi H."/>
            <person name="Takemaru K."/>
            <person name="Takeuchi M."/>
            <person name="Tamakoshi A."/>
            <person name="Tanaka T."/>
            <person name="Terpstra P."/>
            <person name="Tognoni A."/>
            <person name="Tosato V."/>
            <person name="Uchiyama S."/>
            <person name="Vandenbol M."/>
            <person name="Vannier F."/>
            <person name="Vassarotti A."/>
            <person name="Viari A."/>
            <person name="Wambutt R."/>
            <person name="Wedler E."/>
            <person name="Wedler H."/>
            <person name="Weitzenegger T."/>
            <person name="Winters P."/>
            <person name="Wipat A."/>
            <person name="Yamamoto H."/>
            <person name="Yamane K."/>
            <person name="Yasumoto K."/>
            <person name="Yata K."/>
            <person name="Yoshida K."/>
            <person name="Yoshikawa H.-F."/>
            <person name="Zumstein E."/>
            <person name="Yoshikawa H."/>
            <person name="Danchin A."/>
        </authorList>
    </citation>
    <scope>NUCLEOTIDE SEQUENCE [LARGE SCALE GENOMIC DNA]</scope>
    <source>
        <strain>168</strain>
    </source>
</reference>
<reference key="4">
    <citation type="journal article" date="2009" name="Microbiology">
        <title>From a consortium sequence to a unified sequence: the Bacillus subtilis 168 reference genome a decade later.</title>
        <authorList>
            <person name="Barbe V."/>
            <person name="Cruveiller S."/>
            <person name="Kunst F."/>
            <person name="Lenoble P."/>
            <person name="Meurice G."/>
            <person name="Sekowska A."/>
            <person name="Vallenet D."/>
            <person name="Wang T."/>
            <person name="Moszer I."/>
            <person name="Medigue C."/>
            <person name="Danchin A."/>
        </authorList>
    </citation>
    <scope>SEQUENCE REVISION TO 385-386</scope>
</reference>
<reference key="5">
    <citation type="journal article" date="1991" name="Mol. Microbiol.">
        <title>Expression of the gene encoding glycerol-3-phosphate dehydrogenase (glpD) in Bacillus subtilis is controlled by antitermination.</title>
        <authorList>
            <person name="Holmberg C."/>
            <person name="Rutberg B."/>
        </authorList>
    </citation>
    <scope>TRANSCRIPTIONAL REGULATION</scope>
</reference>
<comment type="catalytic activity">
    <reaction>
        <text>a quinone + sn-glycerol 3-phosphate = dihydroxyacetone phosphate + a quinol</text>
        <dbReference type="Rhea" id="RHEA:18977"/>
        <dbReference type="ChEBI" id="CHEBI:24646"/>
        <dbReference type="ChEBI" id="CHEBI:57597"/>
        <dbReference type="ChEBI" id="CHEBI:57642"/>
        <dbReference type="ChEBI" id="CHEBI:132124"/>
        <dbReference type="EC" id="1.1.5.3"/>
    </reaction>
</comment>
<comment type="cofactor">
    <cofactor>
        <name>FAD</name>
        <dbReference type="ChEBI" id="CHEBI:57692"/>
    </cofactor>
</comment>
<comment type="pathway">
    <text>Polyol metabolism; glycerol degradation via glycerol kinase pathway; glycerone phosphate from sn-glycerol 3-phosphate (aerobic route): step 1/1.</text>
</comment>
<comment type="subcellular location">
    <subcellularLocation>
        <location>Cytoplasm</location>
    </subcellularLocation>
</comment>
<comment type="induction">
    <text evidence="2">Requires glycerol 3-phosphate and the GlpP product; repressed by glucose.</text>
</comment>
<comment type="similarity">
    <text evidence="3">Belongs to the FAD-dependent glycerol-3-phosphate dehydrogenase family.</text>
</comment>
<gene>
    <name type="primary">glpD</name>
    <name type="ordered locus">BSU09300</name>
</gene>
<keyword id="KW-0963">Cytoplasm</keyword>
<keyword id="KW-0274">FAD</keyword>
<keyword id="KW-0285">Flavoprotein</keyword>
<keyword id="KW-0319">Glycerol metabolism</keyword>
<keyword id="KW-0560">Oxidoreductase</keyword>
<keyword id="KW-1185">Reference proteome</keyword>
<name>GLPD_BACSU</name>
<evidence type="ECO:0000255" key="1"/>
<evidence type="ECO:0000269" key="2">
    <source>
    </source>
</evidence>
<evidence type="ECO:0000305" key="3"/>
<feature type="chain" id="PRO_0000126097" description="Aerobic glycerol-3-phosphate dehydrogenase">
    <location>
        <begin position="1"/>
        <end position="555"/>
    </location>
</feature>
<feature type="binding site" evidence="1">
    <location>
        <begin position="24"/>
        <end position="52"/>
    </location>
    <ligand>
        <name>FAD</name>
        <dbReference type="ChEBI" id="CHEBI:57692"/>
    </ligand>
</feature>
<feature type="sequence conflict" description="In Ref. 1; AAA22487 and 2; CAA74430." evidence="3" ref="1 2">
    <original>EH</original>
    <variation>DD</variation>
    <location>
        <begin position="385"/>
        <end position="386"/>
    </location>
</feature>
<protein>
    <recommendedName>
        <fullName>Aerobic glycerol-3-phosphate dehydrogenase</fullName>
        <ecNumber>1.1.5.3</ecNumber>
    </recommendedName>
</protein>
<accession>P18158</accession>